<protein>
    <recommendedName>
        <fullName evidence="5">UDP-glucuronosyltransferase 1A5</fullName>
        <shortName>UGT1A5</shortName>
        <ecNumber evidence="2">2.4.1.17</ecNumber>
    </recommendedName>
    <alternativeName>
        <fullName>B5</fullName>
    </alternativeName>
    <alternativeName>
        <fullName>UDP-glucuronosyltransferase 1-5</fullName>
        <shortName>UDPGT 1-5</shortName>
        <shortName>UGT1*5</shortName>
        <shortName>UGT1-05</shortName>
        <shortName>UGT1.5</shortName>
    </alternativeName>
</protein>
<accession>Q64638</accession>
<name>UD15_RAT</name>
<gene>
    <name evidence="6" type="primary">Ugt1a5</name>
    <name type="synonym">Ugt1</name>
</gene>
<comment type="function">
    <text evidence="2">UDP-glucuronosyltransferase (UGT) that catalyzes phase II biotransformation reactions in which lipophilic substrates are conjugated with glucuronic acid to increase the metabolite's water solubility, thereby facilitating excretion into either the urine or bile. Essential for the elimination and detoxification of drugs, xenobiotics and endogenous compounds. Involved in the glucuronidation of the AGTR1 angiotensin receptor antagonist zolarsatan, a drug which can inhibit the effect of angiotensin II.</text>
</comment>
<comment type="catalytic activity">
    <reaction evidence="2">
        <text>glucuronate acceptor + UDP-alpha-D-glucuronate = acceptor beta-D-glucuronoside + UDP + H(+)</text>
        <dbReference type="Rhea" id="RHEA:21032"/>
        <dbReference type="ChEBI" id="CHEBI:15378"/>
        <dbReference type="ChEBI" id="CHEBI:58052"/>
        <dbReference type="ChEBI" id="CHEBI:58223"/>
        <dbReference type="ChEBI" id="CHEBI:132367"/>
        <dbReference type="ChEBI" id="CHEBI:132368"/>
        <dbReference type="EC" id="2.4.1.17"/>
    </reaction>
    <physiologicalReaction direction="left-to-right" evidence="2">
        <dbReference type="Rhea" id="RHEA:21033"/>
    </physiologicalReaction>
</comment>
<comment type="catalytic activity">
    <reaction evidence="2">
        <text>zolasartan + UDP-alpha-D-glucuronate = zolarsartan-1-N-beta-D-glucuronide + UDP</text>
        <dbReference type="Rhea" id="RHEA:63744"/>
        <dbReference type="ChEBI" id="CHEBI:58052"/>
        <dbReference type="ChEBI" id="CHEBI:58223"/>
        <dbReference type="ChEBI" id="CHEBI:149524"/>
        <dbReference type="ChEBI" id="CHEBI:149527"/>
    </reaction>
    <physiologicalReaction direction="left-to-right" evidence="2">
        <dbReference type="Rhea" id="RHEA:63745"/>
    </physiologicalReaction>
</comment>
<comment type="subunit">
    <text evidence="3">Homodimer. Homooligomer. Interacts with UGT1A1, UGT1A3, UGT1A4, UGT1A6, UGT1A7, UGT1A8, UGT1A9 and UGT1A10 to form heterodimers.</text>
</comment>
<comment type="subcellular location">
    <subcellularLocation>
        <location evidence="1">Endoplasmic reticulum membrane</location>
        <topology evidence="4">Single-pass membrane protein</topology>
    </subcellularLocation>
</comment>
<comment type="alternative products">
    <event type="alternative splicing"/>
    <isoform>
        <id>Q64638-1</id>
        <name>1</name>
        <sequence type="displayed"/>
    </isoform>
    <text evidence="2">UGT1A5 is one of the isoforms produced at the UGT1A complex locus. The UGT1A complex locus produces different isoforms based on alternative use of promoters, first exons and terminal exons.</text>
</comment>
<comment type="similarity">
    <text evidence="5">Belongs to the UDP-glycosyltransferase family.</text>
</comment>
<sequence>MGLHVTLQGLAGLLLLLYALPWAEGGKVLVFPMEGSHWLSMRDVVRELHARGHQAVVLAPEVTVHIKEEDFFTLQTYPVPYTRQGFRQQMMRNIKVVFETGNYVKTFLETSEILKNISTVLLRSCMNLLHNGSLLQHLNSSSFDMVLTDPVIPCGQVLAKYLGIPTVFFLRYIPCGIDSEATQCPKPSSYIPNLLTMLSDHMTFLQRVKNMLYPLALKYICHFSFTRYESLASELLQREVSLVEVLSHASVWLFRGDFVFDYPRPVMPNMVFIGGINCVIKKPLSQEFEAYVNASGEHGIVVFSLGSMVSEIPEKKAMEIAEALGRIPQTLLWRYTGTRPSNLAKNTILVKWLPQNDLLGHPKARAFITHSGSHGIYEGICNGVPMVMMPLFGDQMDNAKRMETRGAGVTLNVLEMTADDLENALKTVINNKSYKENIMRLSSLHKDRPIEPLDLAVFWVEYVMRHKGAPHLRPAAHDLTWYQYHSLDVIGFLLAIVLTVVFIVYKSCAYGCRKCFGGKGRVKKSHKSKTH</sequence>
<evidence type="ECO:0000250" key="1">
    <source>
        <dbReference type="UniProtKB" id="P22309"/>
    </source>
</evidence>
<evidence type="ECO:0000250" key="2">
    <source>
        <dbReference type="UniProtKB" id="P35504"/>
    </source>
</evidence>
<evidence type="ECO:0000250" key="3">
    <source>
        <dbReference type="UniProtKB" id="Q9HAW7"/>
    </source>
</evidence>
<evidence type="ECO:0000255" key="4"/>
<evidence type="ECO:0000305" key="5"/>
<evidence type="ECO:0000312" key="6">
    <source>
        <dbReference type="RGD" id="1583689"/>
    </source>
</evidence>
<reference key="1">
    <citation type="journal article" date="1995" name="J. Biochem.">
        <title>Drug-responsive and tissue-specific alternative expression of multiple first exons in rat UDP-glucuronosyltransferase family 1 (UGT1) gene complex.</title>
        <authorList>
            <person name="Emi Y."/>
            <person name="Ikushiro S."/>
            <person name="Iyanagi T."/>
        </authorList>
    </citation>
    <scope>NUCLEOTIDE SEQUENCE [GENOMIC DNA] OF 1-286</scope>
    <source>
        <strain>Wistar</strain>
    </source>
</reference>
<reference key="2">
    <citation type="journal article" date="1990" name="Biochem. Biophys. Res. Commun.">
        <title>Isolation and sequencing of rat liver bilirubin UDP-glucuronosyltransferase cDNA: possible alternate splicing of a common primary transcript.</title>
        <authorList>
            <person name="Sato H."/>
            <person name="Koiwai O."/>
            <person name="Tanabe K."/>
            <person name="Kashiwamata S."/>
        </authorList>
    </citation>
    <scope>NUCLEOTIDE SEQUENCE [MRNA] OF 287-531</scope>
    <source>
        <tissue>Liver</tissue>
    </source>
</reference>
<dbReference type="EC" id="2.4.1.17" evidence="2"/>
<dbReference type="EMBL" id="D38069">
    <property type="protein sequence ID" value="BAA07263.1"/>
    <property type="molecule type" value="Genomic_DNA"/>
</dbReference>
<dbReference type="EMBL" id="M34007">
    <property type="protein sequence ID" value="AAA42312.1"/>
    <property type="status" value="ALT_TERM"/>
    <property type="molecule type" value="mRNA"/>
</dbReference>
<dbReference type="SMR" id="Q64638"/>
<dbReference type="FunCoup" id="Q64638">
    <property type="interactions" value="27"/>
</dbReference>
<dbReference type="CAZy" id="GT1">
    <property type="family name" value="Glycosyltransferase Family 1"/>
</dbReference>
<dbReference type="GlyCosmos" id="Q64638">
    <property type="glycosylation" value="5 sites, No reported glycans"/>
</dbReference>
<dbReference type="GlyGen" id="Q64638">
    <property type="glycosylation" value="5 sites"/>
</dbReference>
<dbReference type="PhosphoSitePlus" id="Q64638"/>
<dbReference type="AGR" id="RGD:1583689"/>
<dbReference type="RGD" id="1583689">
    <property type="gene designation" value="Ugt1a5"/>
</dbReference>
<dbReference type="InParanoid" id="Q64638"/>
<dbReference type="BRENDA" id="2.4.1.17">
    <property type="organism ID" value="5301"/>
</dbReference>
<dbReference type="Reactome" id="R-RNO-156588">
    <property type="pathway name" value="Glucuronidation"/>
</dbReference>
<dbReference type="Reactome" id="R-RNO-189483">
    <property type="pathway name" value="Heme degradation"/>
</dbReference>
<dbReference type="Reactome" id="R-RNO-9749641">
    <property type="pathway name" value="Aspirin ADME"/>
</dbReference>
<dbReference type="Reactome" id="R-RNO-9754706">
    <property type="pathway name" value="Atorvastatin ADME"/>
</dbReference>
<dbReference type="Reactome" id="R-RNO-9757110">
    <property type="pathway name" value="Prednisone ADME"/>
</dbReference>
<dbReference type="PRO" id="PR:Q64638"/>
<dbReference type="Proteomes" id="UP000002494">
    <property type="component" value="Unplaced"/>
</dbReference>
<dbReference type="GO" id="GO:0005783">
    <property type="term" value="C:endoplasmic reticulum"/>
    <property type="evidence" value="ECO:0000266"/>
    <property type="project" value="RGD"/>
</dbReference>
<dbReference type="GO" id="GO:0005789">
    <property type="term" value="C:endoplasmic reticulum membrane"/>
    <property type="evidence" value="ECO:0007669"/>
    <property type="project" value="UniProtKB-SubCell"/>
</dbReference>
<dbReference type="GO" id="GO:0019899">
    <property type="term" value="F:enzyme binding"/>
    <property type="evidence" value="ECO:0000266"/>
    <property type="project" value="RGD"/>
</dbReference>
<dbReference type="GO" id="GO:0015020">
    <property type="term" value="F:glucuronosyltransferase activity"/>
    <property type="evidence" value="ECO:0000266"/>
    <property type="project" value="RGD"/>
</dbReference>
<dbReference type="GO" id="GO:0042803">
    <property type="term" value="F:protein homodimerization activity"/>
    <property type="evidence" value="ECO:0000266"/>
    <property type="project" value="RGD"/>
</dbReference>
<dbReference type="GO" id="GO:0071361">
    <property type="term" value="P:cellular response to ethanol"/>
    <property type="evidence" value="ECO:0000270"/>
    <property type="project" value="RGD"/>
</dbReference>
<dbReference type="GO" id="GO:0071385">
    <property type="term" value="P:cellular response to glucocorticoid stimulus"/>
    <property type="evidence" value="ECO:0000270"/>
    <property type="project" value="RGD"/>
</dbReference>
<dbReference type="GO" id="GO:0032870">
    <property type="term" value="P:cellular response to hormone stimulus"/>
    <property type="evidence" value="ECO:0000270"/>
    <property type="project" value="RGD"/>
</dbReference>
<dbReference type="GO" id="GO:0001889">
    <property type="term" value="P:liver development"/>
    <property type="evidence" value="ECO:0000270"/>
    <property type="project" value="RGD"/>
</dbReference>
<dbReference type="GO" id="GO:0070640">
    <property type="term" value="P:vitamin D3 metabolic process"/>
    <property type="evidence" value="ECO:0000266"/>
    <property type="project" value="RGD"/>
</dbReference>
<dbReference type="CDD" id="cd03784">
    <property type="entry name" value="GT1_Gtf-like"/>
    <property type="match status" value="1"/>
</dbReference>
<dbReference type="FunFam" id="3.40.50.2000:FF:000001">
    <property type="entry name" value="UDP-glucuronosyltransferase"/>
    <property type="match status" value="1"/>
</dbReference>
<dbReference type="FunFam" id="3.40.50.2000:FF:000066">
    <property type="entry name" value="UDP-glucuronosyltransferase 1-1"/>
    <property type="match status" value="1"/>
</dbReference>
<dbReference type="Gene3D" id="3.40.50.2000">
    <property type="entry name" value="Glycogen Phosphorylase B"/>
    <property type="match status" value="2"/>
</dbReference>
<dbReference type="InterPro" id="IPR050271">
    <property type="entry name" value="UDP-glycosyltransferase"/>
</dbReference>
<dbReference type="InterPro" id="IPR002213">
    <property type="entry name" value="UDP_glucos_trans"/>
</dbReference>
<dbReference type="InterPro" id="IPR035595">
    <property type="entry name" value="UDP_glycos_trans_CS"/>
</dbReference>
<dbReference type="PANTHER" id="PTHR48043">
    <property type="entry name" value="EG:EG0003.4 PROTEIN-RELATED"/>
    <property type="match status" value="1"/>
</dbReference>
<dbReference type="PANTHER" id="PTHR48043:SF161">
    <property type="entry name" value="UDP GLUCURONOSYLTRANSFERASE FAMILY 1 MEMBER A1"/>
    <property type="match status" value="1"/>
</dbReference>
<dbReference type="Pfam" id="PF00201">
    <property type="entry name" value="UDPGT"/>
    <property type="match status" value="1"/>
</dbReference>
<dbReference type="SUPFAM" id="SSF53756">
    <property type="entry name" value="UDP-Glycosyltransferase/glycogen phosphorylase"/>
    <property type="match status" value="1"/>
</dbReference>
<dbReference type="PROSITE" id="PS00375">
    <property type="entry name" value="UDPGT"/>
    <property type="match status" value="1"/>
</dbReference>
<keyword id="KW-0025">Alternative splicing</keyword>
<keyword id="KW-0256">Endoplasmic reticulum</keyword>
<keyword id="KW-0325">Glycoprotein</keyword>
<keyword id="KW-0328">Glycosyltransferase</keyword>
<keyword id="KW-0472">Membrane</keyword>
<keyword id="KW-1185">Reference proteome</keyword>
<keyword id="KW-0732">Signal</keyword>
<keyword id="KW-0808">Transferase</keyword>
<keyword id="KW-0812">Transmembrane</keyword>
<keyword id="KW-1133">Transmembrane helix</keyword>
<feature type="signal peptide" evidence="4">
    <location>
        <begin position="1"/>
        <end position="25"/>
    </location>
</feature>
<feature type="chain" id="PRO_0000036016" description="UDP-glucuronosyltransferase 1A5">
    <location>
        <begin position="26"/>
        <end position="531"/>
    </location>
</feature>
<feature type="transmembrane region" description="Helical" evidence="4">
    <location>
        <begin position="489"/>
        <end position="505"/>
    </location>
</feature>
<feature type="glycosylation site" description="N-linked (GlcNAc...) asparagine" evidence="4">
    <location>
        <position position="116"/>
    </location>
</feature>
<feature type="glycosylation site" description="N-linked (GlcNAc...) asparagine" evidence="4">
    <location>
        <position position="131"/>
    </location>
</feature>
<feature type="glycosylation site" description="N-linked (GlcNAc...) asparagine" evidence="4">
    <location>
        <position position="139"/>
    </location>
</feature>
<feature type="glycosylation site" description="N-linked (GlcNAc...) asparagine" evidence="4">
    <location>
        <position position="293"/>
    </location>
</feature>
<feature type="glycosylation site" description="N-linked (GlcNAc...) asparagine" evidence="4">
    <location>
        <position position="431"/>
    </location>
</feature>
<organism>
    <name type="scientific">Rattus norvegicus</name>
    <name type="common">Rat</name>
    <dbReference type="NCBI Taxonomy" id="10116"/>
    <lineage>
        <taxon>Eukaryota</taxon>
        <taxon>Metazoa</taxon>
        <taxon>Chordata</taxon>
        <taxon>Craniata</taxon>
        <taxon>Vertebrata</taxon>
        <taxon>Euteleostomi</taxon>
        <taxon>Mammalia</taxon>
        <taxon>Eutheria</taxon>
        <taxon>Euarchontoglires</taxon>
        <taxon>Glires</taxon>
        <taxon>Rodentia</taxon>
        <taxon>Myomorpha</taxon>
        <taxon>Muroidea</taxon>
        <taxon>Muridae</taxon>
        <taxon>Murinae</taxon>
        <taxon>Rattus</taxon>
    </lineage>
</organism>
<proteinExistence type="evidence at transcript level"/>